<accession>Q28J82</accession>
<reference evidence="8" key="1">
    <citation type="submission" date="2006-10" db="EMBL/GenBank/DDBJ databases">
        <authorList>
            <consortium name="Sanger Xenopus tropicalis EST/cDNA project"/>
        </authorList>
    </citation>
    <scope>NUCLEOTIDE SEQUENCE [LARGE SCALE MRNA]</scope>
    <source>
        <tissue evidence="8">Neurula</tissue>
    </source>
</reference>
<reference evidence="7" key="2">
    <citation type="journal article" date="2007" name="Dev. Dyn.">
        <title>Census of vertebrate Wnt genes: isolation and developmental expression of Xenopus Wnt2, Wnt3, Wnt9a, Wnt9b, Wnt10a, and Wnt16.</title>
        <authorList>
            <person name="Garriock R.J."/>
            <person name="Warkman A.S."/>
            <person name="Meadows S.M."/>
            <person name="D'Agostino S."/>
            <person name="Krieg P.A."/>
        </authorList>
    </citation>
    <scope>NOMENCLATURE</scope>
</reference>
<organism>
    <name type="scientific">Xenopus tropicalis</name>
    <name type="common">Western clawed frog</name>
    <name type="synonym">Silurana tropicalis</name>
    <dbReference type="NCBI Taxonomy" id="8364"/>
    <lineage>
        <taxon>Eukaryota</taxon>
        <taxon>Metazoa</taxon>
        <taxon>Chordata</taxon>
        <taxon>Craniata</taxon>
        <taxon>Vertebrata</taxon>
        <taxon>Euteleostomi</taxon>
        <taxon>Amphibia</taxon>
        <taxon>Batrachia</taxon>
        <taxon>Anura</taxon>
        <taxon>Pipoidea</taxon>
        <taxon>Pipidae</taxon>
        <taxon>Xenopodinae</taxon>
        <taxon>Xenopus</taxon>
        <taxon>Silurana</taxon>
    </lineage>
</organism>
<evidence type="ECO:0000250" key="1">
    <source>
        <dbReference type="UniProtKB" id="P27467"/>
    </source>
</evidence>
<evidence type="ECO:0000250" key="2">
    <source>
        <dbReference type="UniProtKB" id="P28026"/>
    </source>
</evidence>
<evidence type="ECO:0000250" key="3">
    <source>
        <dbReference type="UniProtKB" id="P49893"/>
    </source>
</evidence>
<evidence type="ECO:0000250" key="4">
    <source>
        <dbReference type="UniProtKB" id="P56704"/>
    </source>
</evidence>
<evidence type="ECO:0000255" key="5"/>
<evidence type="ECO:0000303" key="6">
    <source>
    </source>
</evidence>
<evidence type="ECO:0000305" key="7"/>
<evidence type="ECO:0000312" key="8">
    <source>
        <dbReference type="EMBL" id="CAJ82831.1"/>
    </source>
</evidence>
<evidence type="ECO:0000312" key="9">
    <source>
        <dbReference type="Xenbase" id="XB-GENE-5858981"/>
    </source>
</evidence>
<name>W11B2_XENTR</name>
<protein>
    <recommendedName>
        <fullName evidence="6">Protein Wnt-11b-2</fullName>
    </recommendedName>
</protein>
<sequence length="353" mass="38858">MALIRHCVTLLLILCCSRLCGAIQWLGLTVNGSRVAWNESEHCRLLDGLVPEQSQLCKRNLELMQSVVNAAKQAKLTCQMTFSDMRWNCSSVENAPNFTPDLSKGTRESAFVYALASATISHTIARACASGELPTCSCGATPAEVPGTGFRWGGCGDNLHYGLNMGSAFVDAPMKSSKSGGTQATKMINLHNNAVGRQVLMDSLETKCKCHGVSGSCSVKTCWKGLQDLPHIANELKSKYLGATKVIHRQTGTRRQLVPRELDIRPVRESELVYLVSSPDYCAKNPKLGSYGTQDRVCNKTSVGSDSCNLMCCGRGYNAYTETIVERCQCKYYWCCYVMCKKCERTVERYVCK</sequence>
<keyword id="KW-0217">Developmental protein</keyword>
<keyword id="KW-1015">Disulfide bond</keyword>
<keyword id="KW-0272">Extracellular matrix</keyword>
<keyword id="KW-0306">Gastrulation</keyword>
<keyword id="KW-0325">Glycoprotein</keyword>
<keyword id="KW-0449">Lipoprotein</keyword>
<keyword id="KW-1185">Reference proteome</keyword>
<keyword id="KW-0964">Secreted</keyword>
<keyword id="KW-0732">Signal</keyword>
<keyword id="KW-0765">Sulfation</keyword>
<keyword id="KW-0879">Wnt signaling pathway</keyword>
<dbReference type="EMBL" id="CR760014">
    <property type="protein sequence ID" value="CAJ82831.1"/>
    <property type="molecule type" value="mRNA"/>
</dbReference>
<dbReference type="RefSeq" id="NP_001016735.1">
    <property type="nucleotide sequence ID" value="NM_001016735.2"/>
</dbReference>
<dbReference type="SMR" id="Q28J82"/>
<dbReference type="STRING" id="8364.ENSXETP00000036168"/>
<dbReference type="GlyCosmos" id="Q28J82">
    <property type="glycosylation" value="4 sites, No reported glycans"/>
</dbReference>
<dbReference type="PaxDb" id="8364-ENSXETP00000050201"/>
<dbReference type="GeneID" id="549489"/>
<dbReference type="KEGG" id="xtr:549489"/>
<dbReference type="AGR" id="Xenbase:XB-GENE-5858981"/>
<dbReference type="CTD" id="100170842"/>
<dbReference type="Xenbase" id="XB-GENE-5858981">
    <property type="gene designation" value="wnt11b"/>
</dbReference>
<dbReference type="eggNOG" id="KOG3913">
    <property type="taxonomic scope" value="Eukaryota"/>
</dbReference>
<dbReference type="HOGENOM" id="CLU_033039_1_0_1"/>
<dbReference type="InParanoid" id="Q28J82"/>
<dbReference type="OMA" id="CYVMCKK"/>
<dbReference type="OrthoDB" id="5945655at2759"/>
<dbReference type="PhylomeDB" id="Q28J82"/>
<dbReference type="Proteomes" id="UP000008143">
    <property type="component" value="Chromosome 8"/>
</dbReference>
<dbReference type="Bgee" id="ENSXETG00000023227">
    <property type="expression patterns" value="Expressed in 4-cell stage embryo and 15 other cell types or tissues"/>
</dbReference>
<dbReference type="ExpressionAtlas" id="Q28J82">
    <property type="expression patterns" value="baseline"/>
</dbReference>
<dbReference type="GO" id="GO:0005576">
    <property type="term" value="C:extracellular region"/>
    <property type="evidence" value="ECO:0000250"/>
    <property type="project" value="UniProtKB"/>
</dbReference>
<dbReference type="GO" id="GO:0005102">
    <property type="term" value="F:signaling receptor binding"/>
    <property type="evidence" value="ECO:0007669"/>
    <property type="project" value="InterPro"/>
</dbReference>
<dbReference type="GO" id="GO:0007369">
    <property type="term" value="P:gastrulation"/>
    <property type="evidence" value="ECO:0007669"/>
    <property type="project" value="UniProtKB-KW"/>
</dbReference>
<dbReference type="GO" id="GO:0016055">
    <property type="term" value="P:Wnt signaling pathway"/>
    <property type="evidence" value="ECO:0007669"/>
    <property type="project" value="UniProtKB-KW"/>
</dbReference>
<dbReference type="CDD" id="cd19343">
    <property type="entry name" value="Wnt_Wnt11"/>
    <property type="match status" value="1"/>
</dbReference>
<dbReference type="FunFam" id="3.30.2460.20:FF:000001">
    <property type="entry name" value="Wnt homolog"/>
    <property type="match status" value="1"/>
</dbReference>
<dbReference type="Gene3D" id="3.30.2460.20">
    <property type="match status" value="1"/>
</dbReference>
<dbReference type="InterPro" id="IPR005817">
    <property type="entry name" value="Wnt"/>
</dbReference>
<dbReference type="InterPro" id="IPR043158">
    <property type="entry name" value="Wnt_C"/>
</dbReference>
<dbReference type="InterPro" id="IPR018161">
    <property type="entry name" value="Wnt_CS"/>
</dbReference>
<dbReference type="PANTHER" id="PTHR12027:SF34">
    <property type="entry name" value="PROTEIN WNT"/>
    <property type="match status" value="1"/>
</dbReference>
<dbReference type="PANTHER" id="PTHR12027">
    <property type="entry name" value="WNT RELATED"/>
    <property type="match status" value="1"/>
</dbReference>
<dbReference type="Pfam" id="PF00110">
    <property type="entry name" value="wnt"/>
    <property type="match status" value="1"/>
</dbReference>
<dbReference type="PRINTS" id="PR01349">
    <property type="entry name" value="WNTPROTEIN"/>
</dbReference>
<dbReference type="SMART" id="SM00097">
    <property type="entry name" value="WNT1"/>
    <property type="match status" value="1"/>
</dbReference>
<dbReference type="PROSITE" id="PS00246">
    <property type="entry name" value="WNT1"/>
    <property type="match status" value="1"/>
</dbReference>
<feature type="signal peptide" evidence="5">
    <location>
        <begin position="1"/>
        <end position="22"/>
    </location>
</feature>
<feature type="chain" id="PRO_0000397209" description="Protein Wnt-11b-2" evidence="5">
    <location>
        <begin position="23"/>
        <end position="353"/>
    </location>
</feature>
<feature type="modified residue" description="Sulfotyrosine" evidence="3">
    <location>
        <position position="274"/>
    </location>
</feature>
<feature type="modified residue" description="Sulfotyrosine" evidence="3">
    <location>
        <position position="281"/>
    </location>
</feature>
<feature type="lipid moiety-binding region" description="O-palmitoleoyl serine; by PORCN" evidence="4">
    <location>
        <position position="214"/>
    </location>
</feature>
<feature type="glycosylation site" description="N-linked (GlcNAc...) asparagine" evidence="5">
    <location>
        <position position="31"/>
    </location>
</feature>
<feature type="glycosylation site" description="N-linked (GlcNAc...) asparagine" evidence="5">
    <location>
        <position position="38"/>
    </location>
</feature>
<feature type="glycosylation site" description="N-linked (GlcNAc...) asparagine" evidence="5">
    <location>
        <position position="88"/>
    </location>
</feature>
<feature type="glycosylation site" description="N-linked (GlcNAc...) asparagine" evidence="5">
    <location>
        <position position="299"/>
    </location>
</feature>
<feature type="disulfide bond" evidence="2">
    <location>
        <begin position="78"/>
        <end position="89"/>
    </location>
</feature>
<feature type="disulfide bond" evidence="2">
    <location>
        <begin position="128"/>
        <end position="136"/>
    </location>
</feature>
<feature type="disulfide bond" evidence="2">
    <location>
        <begin position="138"/>
        <end position="155"/>
    </location>
</feature>
<feature type="disulfide bond" evidence="2">
    <location>
        <begin position="208"/>
        <end position="222"/>
    </location>
</feature>
<feature type="disulfide bond" evidence="2">
    <location>
        <begin position="210"/>
        <end position="217"/>
    </location>
</feature>
<feature type="disulfide bond" evidence="2">
    <location>
        <begin position="282"/>
        <end position="313"/>
    </location>
</feature>
<feature type="disulfide bond" evidence="2">
    <location>
        <begin position="298"/>
        <end position="308"/>
    </location>
</feature>
<feature type="disulfide bond" evidence="2">
    <location>
        <begin position="312"/>
        <end position="352"/>
    </location>
</feature>
<feature type="disulfide bond" evidence="2">
    <location>
        <begin position="328"/>
        <end position="343"/>
    </location>
</feature>
<feature type="disulfide bond" evidence="2">
    <location>
        <begin position="330"/>
        <end position="340"/>
    </location>
</feature>
<feature type="disulfide bond" evidence="2">
    <location>
        <begin position="335"/>
        <end position="336"/>
    </location>
</feature>
<gene>
    <name evidence="6" type="primary">wnt11b-2</name>
    <name evidence="8" type="synonym">wnt11</name>
    <name evidence="9" type="synonym">wnt11b</name>
    <name type="ORF">TNeu076g04.1</name>
</gene>
<proteinExistence type="evidence at transcript level"/>
<comment type="function">
    <text evidence="3">Ligand for the frizzled7 transmembrane receptor. Primarily acts via non-canonical Wnt pathways mediated by either Ca(2+) and PKC, or by JNK and dvl2/dsh. Depending on the cellular context, can also signal via the canonical Wnt pathway mediated by beta-catenin and dvl2/dsh. May also inhibit canonical Wnt signaling. Maternally initiates dorsal/ventral axis formation by a canonical route, which signals via lrp6. In a complex with wnt5a, activates the canonical and non-canonical processes involved in axis formation. In the non-canonical pathway, acts through fzd7/fz7 to induce phosphorylation of dvl2/dsh. Signals through a non-canonical Wnt pathway to regulate convergent extension movements during gastrulation. Interactions with the secreted Wnt antagonist sfrp5 to coordinate foregut development, acting via a non-canonical wnt pathway whereby sfrp5 restricts wnt11b activity to prevent inappropriate foregut formation. Mediates cardiogenesis via non-canonical Wnt signaling involving JNK-activation and PKC. Acts redundantly with wnt11/wnt11r during pronephros induction (By similarity).</text>
</comment>
<comment type="subunit">
    <text evidence="3">Homodimer. Secreted homodimers form a complex with wnt5a homodimers; tyrosine sulfation of both wnt11 and wnt5a by tpst1 is required for this interaction. Interacts with the transmembrane receptor fzd7/fz7. Interacts with lrp6 and ryk. Interacts with tdgf1/frl1. Interacts weakly with frzb1 and strongly with frzb2/crescent. Interaction with frzb2/crescent antagonizes wnt11 function in the neuroectoderm, but enhances it in mesodermal tissue (By similarity).</text>
</comment>
<comment type="subcellular location">
    <subcellularLocation>
        <location evidence="3">Secreted</location>
        <location evidence="3">Extracellular space</location>
        <location evidence="3">Extracellular matrix</location>
    </subcellularLocation>
</comment>
<comment type="PTM">
    <text evidence="3">Glycosylation is required for protein secretion.</text>
</comment>
<comment type="PTM">
    <text evidence="1 4">Palmitoleoylation is required for efficient binding to frizzled receptors. Depalmitoleoylation leads to Wnt signaling pathway inhibition.</text>
</comment>
<comment type="miscellaneous">
    <text>Xenopus and other lower vertebrates contain duplicated wnt11 genes (wnt11 and wnt11b) resulting from an ancient gene duplication event, but the second copy has since been lost in mammals. In addition, X.tropicalis has two very similar wnt11b genes suggesting a further recent duplication event.</text>
</comment>
<comment type="similarity">
    <text evidence="5">Belongs to the Wnt family.</text>
</comment>